<accession>A9IVZ7</accession>
<gene>
    <name evidence="1" type="primary">rpsK</name>
    <name type="ordered locus">BT_1495</name>
</gene>
<protein>
    <recommendedName>
        <fullName evidence="1">Small ribosomal subunit protein uS11</fullName>
    </recommendedName>
    <alternativeName>
        <fullName evidence="2">30S ribosomal protein S11</fullName>
    </alternativeName>
</protein>
<proteinExistence type="inferred from homology"/>
<dbReference type="EMBL" id="AM260525">
    <property type="protein sequence ID" value="CAK01841.1"/>
    <property type="molecule type" value="Genomic_DNA"/>
</dbReference>
<dbReference type="RefSeq" id="WP_005773294.1">
    <property type="nucleotide sequence ID" value="NC_010161.1"/>
</dbReference>
<dbReference type="SMR" id="A9IVZ7"/>
<dbReference type="GeneID" id="71061536"/>
<dbReference type="KEGG" id="btr:BT_1495"/>
<dbReference type="eggNOG" id="COG0100">
    <property type="taxonomic scope" value="Bacteria"/>
</dbReference>
<dbReference type="HOGENOM" id="CLU_072439_5_0_5"/>
<dbReference type="Proteomes" id="UP000001592">
    <property type="component" value="Chromosome"/>
</dbReference>
<dbReference type="GO" id="GO:1990904">
    <property type="term" value="C:ribonucleoprotein complex"/>
    <property type="evidence" value="ECO:0007669"/>
    <property type="project" value="UniProtKB-KW"/>
</dbReference>
<dbReference type="GO" id="GO:0005840">
    <property type="term" value="C:ribosome"/>
    <property type="evidence" value="ECO:0007669"/>
    <property type="project" value="UniProtKB-KW"/>
</dbReference>
<dbReference type="GO" id="GO:0019843">
    <property type="term" value="F:rRNA binding"/>
    <property type="evidence" value="ECO:0007669"/>
    <property type="project" value="UniProtKB-UniRule"/>
</dbReference>
<dbReference type="GO" id="GO:0003735">
    <property type="term" value="F:structural constituent of ribosome"/>
    <property type="evidence" value="ECO:0007669"/>
    <property type="project" value="InterPro"/>
</dbReference>
<dbReference type="GO" id="GO:0006412">
    <property type="term" value="P:translation"/>
    <property type="evidence" value="ECO:0007669"/>
    <property type="project" value="UniProtKB-UniRule"/>
</dbReference>
<dbReference type="FunFam" id="3.30.420.80:FF:000001">
    <property type="entry name" value="30S ribosomal protein S11"/>
    <property type="match status" value="1"/>
</dbReference>
<dbReference type="Gene3D" id="3.30.420.80">
    <property type="entry name" value="Ribosomal protein S11"/>
    <property type="match status" value="1"/>
</dbReference>
<dbReference type="HAMAP" id="MF_01310">
    <property type="entry name" value="Ribosomal_uS11"/>
    <property type="match status" value="1"/>
</dbReference>
<dbReference type="InterPro" id="IPR001971">
    <property type="entry name" value="Ribosomal_uS11"/>
</dbReference>
<dbReference type="InterPro" id="IPR019981">
    <property type="entry name" value="Ribosomal_uS11_bac-type"/>
</dbReference>
<dbReference type="InterPro" id="IPR018102">
    <property type="entry name" value="Ribosomal_uS11_CS"/>
</dbReference>
<dbReference type="InterPro" id="IPR036967">
    <property type="entry name" value="Ribosomal_uS11_sf"/>
</dbReference>
<dbReference type="NCBIfam" id="NF003698">
    <property type="entry name" value="PRK05309.1"/>
    <property type="match status" value="1"/>
</dbReference>
<dbReference type="NCBIfam" id="TIGR03632">
    <property type="entry name" value="uS11_bact"/>
    <property type="match status" value="1"/>
</dbReference>
<dbReference type="PANTHER" id="PTHR11759">
    <property type="entry name" value="40S RIBOSOMAL PROTEIN S14/30S RIBOSOMAL PROTEIN S11"/>
    <property type="match status" value="1"/>
</dbReference>
<dbReference type="Pfam" id="PF00411">
    <property type="entry name" value="Ribosomal_S11"/>
    <property type="match status" value="1"/>
</dbReference>
<dbReference type="PIRSF" id="PIRSF002131">
    <property type="entry name" value="Ribosomal_S11"/>
    <property type="match status" value="1"/>
</dbReference>
<dbReference type="SUPFAM" id="SSF53137">
    <property type="entry name" value="Translational machinery components"/>
    <property type="match status" value="1"/>
</dbReference>
<dbReference type="PROSITE" id="PS00054">
    <property type="entry name" value="RIBOSOMAL_S11"/>
    <property type="match status" value="1"/>
</dbReference>
<keyword id="KW-0687">Ribonucleoprotein</keyword>
<keyword id="KW-0689">Ribosomal protein</keyword>
<keyword id="KW-0694">RNA-binding</keyword>
<keyword id="KW-0699">rRNA-binding</keyword>
<evidence type="ECO:0000255" key="1">
    <source>
        <dbReference type="HAMAP-Rule" id="MF_01310"/>
    </source>
</evidence>
<evidence type="ECO:0000305" key="2"/>
<organism>
    <name type="scientific">Bartonella tribocorum (strain CIP 105476 / IBS 506)</name>
    <dbReference type="NCBI Taxonomy" id="382640"/>
    <lineage>
        <taxon>Bacteria</taxon>
        <taxon>Pseudomonadati</taxon>
        <taxon>Pseudomonadota</taxon>
        <taxon>Alphaproteobacteria</taxon>
        <taxon>Hyphomicrobiales</taxon>
        <taxon>Bartonellaceae</taxon>
        <taxon>Bartonella</taxon>
    </lineage>
</organism>
<comment type="function">
    <text evidence="1">Located on the platform of the 30S subunit, it bridges several disparate RNA helices of the 16S rRNA. Forms part of the Shine-Dalgarno cleft in the 70S ribosome.</text>
</comment>
<comment type="subunit">
    <text evidence="1">Part of the 30S ribosomal subunit. Interacts with proteins S7 and S18. Binds to IF-3.</text>
</comment>
<comment type="similarity">
    <text evidence="1">Belongs to the universal ribosomal protein uS11 family.</text>
</comment>
<feature type="chain" id="PRO_1000086177" description="Small ribosomal subunit protein uS11">
    <location>
        <begin position="1"/>
        <end position="129"/>
    </location>
</feature>
<name>RS11_BART1</name>
<reference key="1">
    <citation type="journal article" date="2007" name="Nat. Genet.">
        <title>Genomic analysis of Bartonella identifies type IV secretion systems as host adaptability factors.</title>
        <authorList>
            <person name="Saenz H.L."/>
            <person name="Engel P."/>
            <person name="Stoeckli M.C."/>
            <person name="Lanz C."/>
            <person name="Raddatz G."/>
            <person name="Vayssier-Taussat M."/>
            <person name="Birtles R."/>
            <person name="Schuster S.C."/>
            <person name="Dehio C."/>
        </authorList>
    </citation>
    <scope>NUCLEOTIDE SEQUENCE [LARGE SCALE GENOMIC DNA]</scope>
    <source>
        <strain>CIP 105476 / IBS 506</strain>
    </source>
</reference>
<sequence>MAKEATRVRRRERKNISSGVVHINSTFNNTMITITDAQGNAIAWSSAGAQGFKGARKSTPFAAQVAAEDCARKAQEHGMRSLEVEVCGPGAGRESALRALQSVGFVITSIRDVTPIPHNGCRPRKRRRV</sequence>